<proteinExistence type="evidence at protein level"/>
<name>BUK2_THEMA</name>
<evidence type="ECO:0000255" key="1">
    <source>
        <dbReference type="HAMAP-Rule" id="MF_00542"/>
    </source>
</evidence>
<evidence type="ECO:0007829" key="2">
    <source>
        <dbReference type="PDB" id="1SAZ"/>
    </source>
</evidence>
<evidence type="ECO:0007829" key="3">
    <source>
        <dbReference type="PDB" id="1X9J"/>
    </source>
</evidence>
<accession>Q9X278</accession>
<protein>
    <recommendedName>
        <fullName evidence="1">Probable butyrate kinase 2</fullName>
        <shortName evidence="1">BK 2</shortName>
        <ecNumber evidence="1">2.7.2.7</ecNumber>
    </recommendedName>
    <alternativeName>
        <fullName evidence="1">Branched-chain carboxylic acid kinase 2</fullName>
    </alternativeName>
</protein>
<feature type="chain" id="PRO_0000107675" description="Probable butyrate kinase 2">
    <location>
        <begin position="1"/>
        <end position="375"/>
    </location>
</feature>
<feature type="strand" evidence="2">
    <location>
        <begin position="3"/>
        <end position="9"/>
    </location>
</feature>
<feature type="strand" evidence="2">
    <location>
        <begin position="11"/>
        <end position="20"/>
    </location>
</feature>
<feature type="strand" evidence="2">
    <location>
        <begin position="23"/>
        <end position="31"/>
    </location>
</feature>
<feature type="helix" evidence="2">
    <location>
        <begin position="34"/>
        <end position="38"/>
    </location>
</feature>
<feature type="helix" evidence="2">
    <location>
        <begin position="43"/>
        <end position="46"/>
    </location>
</feature>
<feature type="helix" evidence="2">
    <location>
        <begin position="47"/>
        <end position="59"/>
    </location>
</feature>
<feature type="turn" evidence="2">
    <location>
        <begin position="60"/>
        <end position="62"/>
    </location>
</feature>
<feature type="helix" evidence="2">
    <location>
        <begin position="65"/>
        <end position="67"/>
    </location>
</feature>
<feature type="strand" evidence="2">
    <location>
        <begin position="69"/>
        <end position="74"/>
    </location>
</feature>
<feature type="strand" evidence="2">
    <location>
        <begin position="83"/>
        <end position="87"/>
    </location>
</feature>
<feature type="helix" evidence="2">
    <location>
        <begin position="90"/>
        <end position="98"/>
    </location>
</feature>
<feature type="turn" evidence="2">
    <location>
        <begin position="99"/>
        <end position="101"/>
    </location>
</feature>
<feature type="helix" evidence="2">
    <location>
        <begin position="107"/>
        <end position="120"/>
    </location>
</feature>
<feature type="strand" evidence="2">
    <location>
        <begin position="124"/>
        <end position="128"/>
    </location>
</feature>
<feature type="helix" evidence="2">
    <location>
        <begin position="137"/>
        <end position="139"/>
    </location>
</feature>
<feature type="strand" evidence="3">
    <location>
        <begin position="143"/>
        <end position="146"/>
    </location>
</feature>
<feature type="helix" evidence="2">
    <location>
        <begin position="155"/>
        <end position="168"/>
    </location>
</feature>
<feature type="helix" evidence="2">
    <location>
        <begin position="173"/>
        <end position="175"/>
    </location>
</feature>
<feature type="strand" evidence="2">
    <location>
        <begin position="177"/>
        <end position="193"/>
    </location>
</feature>
<feature type="strand" evidence="2">
    <location>
        <begin position="196"/>
        <end position="200"/>
    </location>
</feature>
<feature type="helix" evidence="2">
    <location>
        <begin position="203"/>
        <end position="205"/>
    </location>
</feature>
<feature type="helix" evidence="2">
    <location>
        <begin position="220"/>
        <end position="227"/>
    </location>
</feature>
<feature type="helix" evidence="2">
    <location>
        <begin position="236"/>
        <end position="238"/>
    </location>
</feature>
<feature type="turn" evidence="2">
    <location>
        <begin position="240"/>
        <end position="243"/>
    </location>
</feature>
<feature type="helix" evidence="2">
    <location>
        <begin position="247"/>
        <end position="251"/>
    </location>
</feature>
<feature type="helix" evidence="2">
    <location>
        <begin position="256"/>
        <end position="264"/>
    </location>
</feature>
<feature type="helix" evidence="2">
    <location>
        <begin position="268"/>
        <end position="291"/>
    </location>
</feature>
<feature type="turn" evidence="2">
    <location>
        <begin position="292"/>
        <end position="294"/>
    </location>
</feature>
<feature type="strand" evidence="2">
    <location>
        <begin position="297"/>
        <end position="303"/>
    </location>
</feature>
<feature type="helix" evidence="2">
    <location>
        <begin position="304"/>
        <end position="307"/>
    </location>
</feature>
<feature type="turn" evidence="2">
    <location>
        <begin position="309"/>
        <end position="311"/>
    </location>
</feature>
<feature type="helix" evidence="2">
    <location>
        <begin position="312"/>
        <end position="320"/>
    </location>
</feature>
<feature type="turn" evidence="2">
    <location>
        <begin position="321"/>
        <end position="323"/>
    </location>
</feature>
<feature type="strand" evidence="2">
    <location>
        <begin position="326"/>
        <end position="331"/>
    </location>
</feature>
<feature type="helix" evidence="2">
    <location>
        <begin position="334"/>
        <end position="346"/>
    </location>
</feature>
<feature type="helix" evidence="2">
    <location>
        <begin position="355"/>
        <end position="369"/>
    </location>
</feature>
<feature type="helix" evidence="2">
    <location>
        <begin position="371"/>
        <end position="373"/>
    </location>
</feature>
<gene>
    <name evidence="1" type="primary">buk2</name>
    <name type="ordered locus">TM_1756</name>
</gene>
<comment type="catalytic activity">
    <reaction evidence="1">
        <text>butanoate + ATP = butanoyl phosphate + ADP</text>
        <dbReference type="Rhea" id="RHEA:13585"/>
        <dbReference type="ChEBI" id="CHEBI:17968"/>
        <dbReference type="ChEBI" id="CHEBI:30616"/>
        <dbReference type="ChEBI" id="CHEBI:58079"/>
        <dbReference type="ChEBI" id="CHEBI:456216"/>
        <dbReference type="EC" id="2.7.2.7"/>
    </reaction>
</comment>
<comment type="subcellular location">
    <subcellularLocation>
        <location evidence="1">Cytoplasm</location>
    </subcellularLocation>
</comment>
<comment type="similarity">
    <text evidence="1">Belongs to the acetokinase family.</text>
</comment>
<sequence length="375" mass="42022">MFRILTINPGSTSTKLSIFEDERMVKMQNFSHSPDELGRFQKILDQLEFREKIARQFVEETGYSLSSFSAFVSRGGLLDPIPGGVYLVDGLMIKTLKSGKNGEHASNLGAIIAHRFSSETGVPAYVVDPVVVDEMEDVARVSGHPNYQRKSIFHALNQKTVAKEVARMMNKRYEEMNLVVAHMGGGISIAAHRKGRVIDVNNALDGDGPFTPERSGTLPLTQLVDLCFSGKFTYEEMKKRIVGNGGLVAYLGTSDAREVVRRIKQGDEWAKRVYRAMAYQIAKWIGKMAAVLKGEVDFIVLTGGLAHEKEFLVPWITKRVSFIAPVLVFPGSNEEKALALSALRVLRGEEKPKNYSEESRRWRERYDSYLDGILR</sequence>
<reference key="1">
    <citation type="journal article" date="1999" name="Nature">
        <title>Evidence for lateral gene transfer between Archaea and Bacteria from genome sequence of Thermotoga maritima.</title>
        <authorList>
            <person name="Nelson K.E."/>
            <person name="Clayton R.A."/>
            <person name="Gill S.R."/>
            <person name="Gwinn M.L."/>
            <person name="Dodson R.J."/>
            <person name="Haft D.H."/>
            <person name="Hickey E.K."/>
            <person name="Peterson J.D."/>
            <person name="Nelson W.C."/>
            <person name="Ketchum K.A."/>
            <person name="McDonald L.A."/>
            <person name="Utterback T.R."/>
            <person name="Malek J.A."/>
            <person name="Linher K.D."/>
            <person name="Garrett M.M."/>
            <person name="Stewart A.M."/>
            <person name="Cotton M.D."/>
            <person name="Pratt M.S."/>
            <person name="Phillips C.A."/>
            <person name="Richardson D.L."/>
            <person name="Heidelberg J.F."/>
            <person name="Sutton G.G."/>
            <person name="Fleischmann R.D."/>
            <person name="Eisen J.A."/>
            <person name="White O."/>
            <person name="Salzberg S.L."/>
            <person name="Smith H.O."/>
            <person name="Venter J.C."/>
            <person name="Fraser C.M."/>
        </authorList>
    </citation>
    <scope>NUCLEOTIDE SEQUENCE [LARGE SCALE GENOMIC DNA]</scope>
    <source>
        <strain>ATCC 43589 / DSM 3109 / JCM 10099 / NBRC 100826 / MSB8</strain>
    </source>
</reference>
<dbReference type="EC" id="2.7.2.7" evidence="1"/>
<dbReference type="EMBL" id="AE000512">
    <property type="protein sequence ID" value="AAD36821.1"/>
    <property type="molecule type" value="Genomic_DNA"/>
</dbReference>
<dbReference type="PIR" id="E72214">
    <property type="entry name" value="E72214"/>
</dbReference>
<dbReference type="RefSeq" id="NP_229554.1">
    <property type="nucleotide sequence ID" value="NC_000853.1"/>
</dbReference>
<dbReference type="RefSeq" id="WP_004082291.1">
    <property type="nucleotide sequence ID" value="NC_000853.1"/>
</dbReference>
<dbReference type="PDB" id="1SAZ">
    <property type="method" value="X-ray"/>
    <property type="resolution" value="2.50 A"/>
    <property type="chains" value="A=1-375"/>
</dbReference>
<dbReference type="PDB" id="1X9J">
    <property type="method" value="X-ray"/>
    <property type="resolution" value="3.00 A"/>
    <property type="chains" value="A/B/C/D/E/F/G/H=1-375"/>
</dbReference>
<dbReference type="PDBsum" id="1SAZ"/>
<dbReference type="PDBsum" id="1X9J"/>
<dbReference type="SMR" id="Q9X278"/>
<dbReference type="FunCoup" id="Q9X278">
    <property type="interactions" value="5"/>
</dbReference>
<dbReference type="STRING" id="243274.TM_1756"/>
<dbReference type="DrugBank" id="DB03909">
    <property type="generic name" value="Adenosine-5'-[Beta, Gamma-Methylene]Triphosphate"/>
</dbReference>
<dbReference type="DrugBank" id="DB01942">
    <property type="generic name" value="Formic acid"/>
</dbReference>
<dbReference type="PaxDb" id="243274-THEMA_05455"/>
<dbReference type="EnsemblBacteria" id="AAD36821">
    <property type="protein sequence ID" value="AAD36821"/>
    <property type="gene ID" value="TM_1756"/>
</dbReference>
<dbReference type="KEGG" id="tma:TM1756"/>
<dbReference type="KEGG" id="tmi:THEMA_05455"/>
<dbReference type="KEGG" id="tmm:Tmari_1764"/>
<dbReference type="KEGG" id="tmw:THMA_1798"/>
<dbReference type="eggNOG" id="COG3426">
    <property type="taxonomic scope" value="Bacteria"/>
</dbReference>
<dbReference type="InParanoid" id="Q9X278"/>
<dbReference type="OrthoDB" id="9771859at2"/>
<dbReference type="BRENDA" id="2.7.2.7">
    <property type="organism ID" value="6331"/>
</dbReference>
<dbReference type="EvolutionaryTrace" id="Q9X278"/>
<dbReference type="Proteomes" id="UP000008183">
    <property type="component" value="Chromosome"/>
</dbReference>
<dbReference type="GO" id="GO:0005737">
    <property type="term" value="C:cytoplasm"/>
    <property type="evidence" value="ECO:0007669"/>
    <property type="project" value="UniProtKB-SubCell"/>
</dbReference>
<dbReference type="GO" id="GO:0008776">
    <property type="term" value="F:acetate kinase activity"/>
    <property type="evidence" value="ECO:0000318"/>
    <property type="project" value="GO_Central"/>
</dbReference>
<dbReference type="GO" id="GO:0005524">
    <property type="term" value="F:ATP binding"/>
    <property type="evidence" value="ECO:0007669"/>
    <property type="project" value="UniProtKB-KW"/>
</dbReference>
<dbReference type="GO" id="GO:0047761">
    <property type="term" value="F:butyrate kinase activity"/>
    <property type="evidence" value="ECO:0007669"/>
    <property type="project" value="UniProtKB-UniRule"/>
</dbReference>
<dbReference type="GO" id="GO:0006083">
    <property type="term" value="P:acetate metabolic process"/>
    <property type="evidence" value="ECO:0000318"/>
    <property type="project" value="GO_Central"/>
</dbReference>
<dbReference type="CDD" id="cd24011">
    <property type="entry name" value="ASKHA_NBD_BK"/>
    <property type="match status" value="1"/>
</dbReference>
<dbReference type="Gene3D" id="3.30.420.40">
    <property type="match status" value="2"/>
</dbReference>
<dbReference type="HAMAP" id="MF_00542">
    <property type="entry name" value="Butyrate_kinase"/>
    <property type="match status" value="1"/>
</dbReference>
<dbReference type="InterPro" id="IPR000890">
    <property type="entry name" value="Aliphatic_acid_kin_short-chain"/>
</dbReference>
<dbReference type="InterPro" id="IPR023865">
    <property type="entry name" value="Aliphatic_acid_kinase_CS"/>
</dbReference>
<dbReference type="InterPro" id="IPR043129">
    <property type="entry name" value="ATPase_NBD"/>
</dbReference>
<dbReference type="InterPro" id="IPR011245">
    <property type="entry name" value="Butyrate_kin"/>
</dbReference>
<dbReference type="NCBIfam" id="TIGR02707">
    <property type="entry name" value="butyr_kinase"/>
    <property type="match status" value="1"/>
</dbReference>
<dbReference type="NCBIfam" id="NF002834">
    <property type="entry name" value="PRK03011.1-5"/>
    <property type="match status" value="1"/>
</dbReference>
<dbReference type="PANTHER" id="PTHR21060">
    <property type="entry name" value="ACETATE KINASE"/>
    <property type="match status" value="1"/>
</dbReference>
<dbReference type="PANTHER" id="PTHR21060:SF3">
    <property type="entry name" value="BUTYRATE KINASE 2-RELATED"/>
    <property type="match status" value="1"/>
</dbReference>
<dbReference type="Pfam" id="PF00871">
    <property type="entry name" value="Acetate_kinase"/>
    <property type="match status" value="1"/>
</dbReference>
<dbReference type="PIRSF" id="PIRSF036458">
    <property type="entry name" value="Butyrate_kin"/>
    <property type="match status" value="1"/>
</dbReference>
<dbReference type="PRINTS" id="PR00471">
    <property type="entry name" value="ACETATEKNASE"/>
</dbReference>
<dbReference type="SUPFAM" id="SSF53067">
    <property type="entry name" value="Actin-like ATPase domain"/>
    <property type="match status" value="2"/>
</dbReference>
<dbReference type="PROSITE" id="PS01075">
    <property type="entry name" value="ACETATE_KINASE_1"/>
    <property type="match status" value="1"/>
</dbReference>
<dbReference type="PROSITE" id="PS01076">
    <property type="entry name" value="ACETATE_KINASE_2"/>
    <property type="match status" value="1"/>
</dbReference>
<organism>
    <name type="scientific">Thermotoga maritima (strain ATCC 43589 / DSM 3109 / JCM 10099 / NBRC 100826 / MSB8)</name>
    <dbReference type="NCBI Taxonomy" id="243274"/>
    <lineage>
        <taxon>Bacteria</taxon>
        <taxon>Thermotogati</taxon>
        <taxon>Thermotogota</taxon>
        <taxon>Thermotogae</taxon>
        <taxon>Thermotogales</taxon>
        <taxon>Thermotogaceae</taxon>
        <taxon>Thermotoga</taxon>
    </lineage>
</organism>
<keyword id="KW-0002">3D-structure</keyword>
<keyword id="KW-0067">ATP-binding</keyword>
<keyword id="KW-0963">Cytoplasm</keyword>
<keyword id="KW-0418">Kinase</keyword>
<keyword id="KW-0547">Nucleotide-binding</keyword>
<keyword id="KW-1185">Reference proteome</keyword>
<keyword id="KW-0808">Transferase</keyword>